<dbReference type="EC" id="2.3.1.-" evidence="7"/>
<dbReference type="EMBL" id="MF806528">
    <property type="protein sequence ID" value="AXF50643.1"/>
    <property type="molecule type" value="Genomic_DNA"/>
</dbReference>
<dbReference type="SMR" id="A0A345BJN0"/>
<dbReference type="GO" id="GO:0004315">
    <property type="term" value="F:3-oxoacyl-[acyl-carrier-protein] synthase activity"/>
    <property type="evidence" value="ECO:0007669"/>
    <property type="project" value="InterPro"/>
</dbReference>
<dbReference type="GO" id="GO:0004312">
    <property type="term" value="F:fatty acid synthase activity"/>
    <property type="evidence" value="ECO:0007669"/>
    <property type="project" value="TreeGrafter"/>
</dbReference>
<dbReference type="GO" id="GO:0008168">
    <property type="term" value="F:methyltransferase activity"/>
    <property type="evidence" value="ECO:0007669"/>
    <property type="project" value="UniProtKB-KW"/>
</dbReference>
<dbReference type="GO" id="GO:0016491">
    <property type="term" value="F:oxidoreductase activity"/>
    <property type="evidence" value="ECO:0007669"/>
    <property type="project" value="InterPro"/>
</dbReference>
<dbReference type="GO" id="GO:0031177">
    <property type="term" value="F:phosphopantetheine binding"/>
    <property type="evidence" value="ECO:0007669"/>
    <property type="project" value="InterPro"/>
</dbReference>
<dbReference type="GO" id="GO:0006633">
    <property type="term" value="P:fatty acid biosynthetic process"/>
    <property type="evidence" value="ECO:0007669"/>
    <property type="project" value="InterPro"/>
</dbReference>
<dbReference type="GO" id="GO:0032259">
    <property type="term" value="P:methylation"/>
    <property type="evidence" value="ECO:0007669"/>
    <property type="project" value="UniProtKB-KW"/>
</dbReference>
<dbReference type="GO" id="GO:0044550">
    <property type="term" value="P:secondary metabolite biosynthetic process"/>
    <property type="evidence" value="ECO:0007669"/>
    <property type="project" value="UniProtKB-ARBA"/>
</dbReference>
<dbReference type="CDD" id="cd02440">
    <property type="entry name" value="AdoMet_MTases"/>
    <property type="match status" value="1"/>
</dbReference>
<dbReference type="CDD" id="cd05195">
    <property type="entry name" value="enoyl_red"/>
    <property type="match status" value="1"/>
</dbReference>
<dbReference type="CDD" id="cd00833">
    <property type="entry name" value="PKS"/>
    <property type="match status" value="1"/>
</dbReference>
<dbReference type="FunFam" id="3.40.50.720:FF:000209">
    <property type="entry name" value="Polyketide synthase Pks12"/>
    <property type="match status" value="1"/>
</dbReference>
<dbReference type="Gene3D" id="3.40.47.10">
    <property type="match status" value="1"/>
</dbReference>
<dbReference type="Gene3D" id="1.10.1200.10">
    <property type="entry name" value="ACP-like"/>
    <property type="match status" value="1"/>
</dbReference>
<dbReference type="Gene3D" id="3.40.366.10">
    <property type="entry name" value="Malonyl-Coenzyme A Acyl Carrier Protein, domain 2"/>
    <property type="match status" value="1"/>
</dbReference>
<dbReference type="Gene3D" id="3.90.180.10">
    <property type="entry name" value="Medium-chain alcohol dehydrogenases, catalytic domain"/>
    <property type="match status" value="1"/>
</dbReference>
<dbReference type="Gene3D" id="3.40.50.720">
    <property type="entry name" value="NAD(P)-binding Rossmann-like Domain"/>
    <property type="match status" value="2"/>
</dbReference>
<dbReference type="Gene3D" id="3.10.129.110">
    <property type="entry name" value="Polyketide synthase dehydratase"/>
    <property type="match status" value="1"/>
</dbReference>
<dbReference type="Gene3D" id="3.40.50.150">
    <property type="entry name" value="Vaccinia Virus protein VP39"/>
    <property type="match status" value="1"/>
</dbReference>
<dbReference type="InterPro" id="IPR001227">
    <property type="entry name" value="Ac_transferase_dom_sf"/>
</dbReference>
<dbReference type="InterPro" id="IPR036736">
    <property type="entry name" value="ACP-like_sf"/>
</dbReference>
<dbReference type="InterPro" id="IPR014043">
    <property type="entry name" value="Acyl_transferase_dom"/>
</dbReference>
<dbReference type="InterPro" id="IPR016035">
    <property type="entry name" value="Acyl_Trfase/lysoPLipase"/>
</dbReference>
<dbReference type="InterPro" id="IPR013154">
    <property type="entry name" value="ADH-like_N"/>
</dbReference>
<dbReference type="InterPro" id="IPR011032">
    <property type="entry name" value="GroES-like_sf"/>
</dbReference>
<dbReference type="InterPro" id="IPR018201">
    <property type="entry name" value="Ketoacyl_synth_AS"/>
</dbReference>
<dbReference type="InterPro" id="IPR014031">
    <property type="entry name" value="Ketoacyl_synth_C"/>
</dbReference>
<dbReference type="InterPro" id="IPR014030">
    <property type="entry name" value="Ketoacyl_synth_N"/>
</dbReference>
<dbReference type="InterPro" id="IPR016036">
    <property type="entry name" value="Malonyl_transacylase_ACP-bd"/>
</dbReference>
<dbReference type="InterPro" id="IPR013217">
    <property type="entry name" value="Methyltransf_12"/>
</dbReference>
<dbReference type="InterPro" id="IPR036291">
    <property type="entry name" value="NAD(P)-bd_dom_sf"/>
</dbReference>
<dbReference type="InterPro" id="IPR032821">
    <property type="entry name" value="PKS_assoc"/>
</dbReference>
<dbReference type="InterPro" id="IPR020841">
    <property type="entry name" value="PKS_Beta-ketoAc_synthase_dom"/>
</dbReference>
<dbReference type="InterPro" id="IPR042104">
    <property type="entry name" value="PKS_dehydratase_sf"/>
</dbReference>
<dbReference type="InterPro" id="IPR020807">
    <property type="entry name" value="PKS_DH"/>
</dbReference>
<dbReference type="InterPro" id="IPR049551">
    <property type="entry name" value="PKS_DH_C"/>
</dbReference>
<dbReference type="InterPro" id="IPR049552">
    <property type="entry name" value="PKS_DH_N"/>
</dbReference>
<dbReference type="InterPro" id="IPR020843">
    <property type="entry name" value="PKS_ER"/>
</dbReference>
<dbReference type="InterPro" id="IPR013968">
    <property type="entry name" value="PKS_KR"/>
</dbReference>
<dbReference type="InterPro" id="IPR049900">
    <property type="entry name" value="PKS_mFAS_DH"/>
</dbReference>
<dbReference type="InterPro" id="IPR050091">
    <property type="entry name" value="PKS_NRPS_Biosynth_Enz"/>
</dbReference>
<dbReference type="InterPro" id="IPR020806">
    <property type="entry name" value="PKS_PP-bd"/>
</dbReference>
<dbReference type="InterPro" id="IPR009081">
    <property type="entry name" value="PP-bd_ACP"/>
</dbReference>
<dbReference type="InterPro" id="IPR029063">
    <property type="entry name" value="SAM-dependent_MTases_sf"/>
</dbReference>
<dbReference type="InterPro" id="IPR016039">
    <property type="entry name" value="Thiolase-like"/>
</dbReference>
<dbReference type="PANTHER" id="PTHR43775">
    <property type="entry name" value="FATTY ACID SYNTHASE"/>
    <property type="match status" value="1"/>
</dbReference>
<dbReference type="PANTHER" id="PTHR43775:SF49">
    <property type="entry name" value="SYNTHASE, PUTATIVE (JCVI)-RELATED"/>
    <property type="match status" value="1"/>
</dbReference>
<dbReference type="Pfam" id="PF00698">
    <property type="entry name" value="Acyl_transf_1"/>
    <property type="match status" value="1"/>
</dbReference>
<dbReference type="Pfam" id="PF08240">
    <property type="entry name" value="ADH_N"/>
    <property type="match status" value="1"/>
</dbReference>
<dbReference type="Pfam" id="PF13602">
    <property type="entry name" value="ADH_zinc_N_2"/>
    <property type="match status" value="1"/>
</dbReference>
<dbReference type="Pfam" id="PF16197">
    <property type="entry name" value="KAsynt_C_assoc"/>
    <property type="match status" value="1"/>
</dbReference>
<dbReference type="Pfam" id="PF00109">
    <property type="entry name" value="ketoacyl-synt"/>
    <property type="match status" value="1"/>
</dbReference>
<dbReference type="Pfam" id="PF02801">
    <property type="entry name" value="Ketoacyl-synt_C"/>
    <property type="match status" value="1"/>
</dbReference>
<dbReference type="Pfam" id="PF08659">
    <property type="entry name" value="KR"/>
    <property type="match status" value="1"/>
</dbReference>
<dbReference type="Pfam" id="PF08242">
    <property type="entry name" value="Methyltransf_12"/>
    <property type="match status" value="1"/>
</dbReference>
<dbReference type="Pfam" id="PF21089">
    <property type="entry name" value="PKS_DH_N"/>
    <property type="match status" value="1"/>
</dbReference>
<dbReference type="Pfam" id="PF14765">
    <property type="entry name" value="PS-DH"/>
    <property type="match status" value="1"/>
</dbReference>
<dbReference type="SMART" id="SM00827">
    <property type="entry name" value="PKS_AT"/>
    <property type="match status" value="1"/>
</dbReference>
<dbReference type="SMART" id="SM00826">
    <property type="entry name" value="PKS_DH"/>
    <property type="match status" value="1"/>
</dbReference>
<dbReference type="SMART" id="SM00829">
    <property type="entry name" value="PKS_ER"/>
    <property type="match status" value="1"/>
</dbReference>
<dbReference type="SMART" id="SM00822">
    <property type="entry name" value="PKS_KR"/>
    <property type="match status" value="1"/>
</dbReference>
<dbReference type="SMART" id="SM00825">
    <property type="entry name" value="PKS_KS"/>
    <property type="match status" value="1"/>
</dbReference>
<dbReference type="SMART" id="SM00823">
    <property type="entry name" value="PKS_PP"/>
    <property type="match status" value="1"/>
</dbReference>
<dbReference type="SUPFAM" id="SSF47336">
    <property type="entry name" value="ACP-like"/>
    <property type="match status" value="1"/>
</dbReference>
<dbReference type="SUPFAM" id="SSF52151">
    <property type="entry name" value="FabD/lysophospholipase-like"/>
    <property type="match status" value="1"/>
</dbReference>
<dbReference type="SUPFAM" id="SSF50129">
    <property type="entry name" value="GroES-like"/>
    <property type="match status" value="1"/>
</dbReference>
<dbReference type="SUPFAM" id="SSF51735">
    <property type="entry name" value="NAD(P)-binding Rossmann-fold domains"/>
    <property type="match status" value="2"/>
</dbReference>
<dbReference type="SUPFAM" id="SSF55048">
    <property type="entry name" value="Probable ACP-binding domain of malonyl-CoA ACP transacylase"/>
    <property type="match status" value="1"/>
</dbReference>
<dbReference type="SUPFAM" id="SSF53335">
    <property type="entry name" value="S-adenosyl-L-methionine-dependent methyltransferases"/>
    <property type="match status" value="1"/>
</dbReference>
<dbReference type="SUPFAM" id="SSF53901">
    <property type="entry name" value="Thiolase-like"/>
    <property type="match status" value="1"/>
</dbReference>
<dbReference type="PROSITE" id="PS50075">
    <property type="entry name" value="CARRIER"/>
    <property type="match status" value="1"/>
</dbReference>
<dbReference type="PROSITE" id="PS00606">
    <property type="entry name" value="KS3_1"/>
    <property type="match status" value="1"/>
</dbReference>
<dbReference type="PROSITE" id="PS52004">
    <property type="entry name" value="KS3_2"/>
    <property type="match status" value="1"/>
</dbReference>
<dbReference type="PROSITE" id="PS52019">
    <property type="entry name" value="PKS_MFAS_DH"/>
    <property type="match status" value="1"/>
</dbReference>
<keyword id="KW-0012">Acyltransferase</keyword>
<keyword id="KW-0489">Methyltransferase</keyword>
<keyword id="KW-0511">Multifunctional enzyme</keyword>
<keyword id="KW-0521">NADP</keyword>
<keyword id="KW-0596">Phosphopantetheine</keyword>
<keyword id="KW-0597">Phosphoprotein</keyword>
<keyword id="KW-0808">Transferase</keyword>
<reference key="1">
    <citation type="journal article" date="2017" name="Org. Lett.">
        <title>Identification and heterologous production of a benzoyl-primed tricarboxylic acid polyketide intermediate from the zaragozic acid A biosynthetic pathway.</title>
        <authorList>
            <person name="Liu N."/>
            <person name="Hung Y.S."/>
            <person name="Gao S.S."/>
            <person name="Hang L."/>
            <person name="Zou Y."/>
            <person name="Chooi Y.H."/>
            <person name="Tang Y."/>
        </authorList>
    </citation>
    <scope>NUCLEOTIDE SEQUENCE [GENOMIC DNA]</scope>
    <scope>FUNCTION</scope>
    <scope>CATALYTIC ACTIVITY</scope>
    <scope>PATHWAY</scope>
    <source>
        <strain>ATCC 74067</strain>
    </source>
</reference>
<name>CLZ14_COCLU</name>
<feature type="chain" id="PRO_0000452626" description="Squalestatin hexaketide synthase clz14">
    <location>
        <begin position="1"/>
        <end position="2555"/>
    </location>
</feature>
<feature type="domain" description="Ketosynthase family 3 (KS3)" evidence="4">
    <location>
        <begin position="91"/>
        <end position="511"/>
    </location>
</feature>
<feature type="domain" description="PKS/mFAS DH" evidence="5">
    <location>
        <begin position="975"/>
        <end position="1260"/>
    </location>
</feature>
<feature type="domain" description="Carrier" evidence="3">
    <location>
        <begin position="2468"/>
        <end position="2546"/>
    </location>
</feature>
<feature type="region of interest" description="Disordered" evidence="6">
    <location>
        <begin position="1"/>
        <end position="84"/>
    </location>
</feature>
<feature type="region of interest" description="Malonyl-CoA:ACP transacylase (MAT) domain" evidence="2">
    <location>
        <begin position="611"/>
        <end position="928"/>
    </location>
</feature>
<feature type="region of interest" description="Dehydratase (DH) domain" evidence="2">
    <location>
        <begin position="975"/>
        <end position="1256"/>
    </location>
</feature>
<feature type="region of interest" description="N-terminal hotdog fold" evidence="5">
    <location>
        <begin position="975"/>
        <end position="1104"/>
    </location>
</feature>
<feature type="region of interest" description="C-terminal hotdog fold" evidence="5">
    <location>
        <begin position="1117"/>
        <end position="1260"/>
    </location>
</feature>
<feature type="region of interest" description="Methyltransferase (CMet) domain" evidence="2">
    <location>
        <begin position="1424"/>
        <end position="1595"/>
    </location>
</feature>
<feature type="region of interest" description="Enoyl reductase (ER) (ER) domain" evidence="2">
    <location>
        <begin position="1821"/>
        <end position="2141"/>
    </location>
</feature>
<feature type="region of interest" description="Ketoreductase (KR) domain" evidence="2">
    <location>
        <begin position="2165"/>
        <end position="2338"/>
    </location>
</feature>
<feature type="compositionally biased region" description="Low complexity" evidence="6">
    <location>
        <begin position="10"/>
        <end position="84"/>
    </location>
</feature>
<feature type="active site" description="For beta-ketoacyl synthase activity" evidence="4">
    <location>
        <position position="261"/>
    </location>
</feature>
<feature type="active site" description="For beta-ketoacyl synthase activity" evidence="4">
    <location>
        <position position="398"/>
    </location>
</feature>
<feature type="active site" description="For beta-ketoacyl synthase activity" evidence="4">
    <location>
        <position position="435"/>
    </location>
</feature>
<feature type="active site" description="Proton acceptor; for dehydratase activity" evidence="5">
    <location>
        <position position="1007"/>
    </location>
</feature>
<feature type="active site" description="Proton donor; for dehydratase activity" evidence="5">
    <location>
        <position position="1177"/>
    </location>
</feature>
<feature type="modified residue" description="O-(pantetheine 4'-phosphoryl)serine" evidence="3">
    <location>
        <position position="2505"/>
    </location>
</feature>
<comment type="function">
    <text evidence="1 7 9">Highly reducing polyketide synthase (HR-PKS); part of the gene cluster that mediates the biosynthesis of squalestatin S1 (SQS1, also known as zaragozic acid A), a heavily oxidized fungal polyketide that offers potent cholesterol lowering activity by targeting squalene synthase (SS) (PubMed:28605916). SQS1 is composed of a 2,8-dioxobicyclic[3.2.1]octane-3,4,5-tricarboxyclic acid core that is connected to two lipophilic polyketide arms (PubMed:28605916). These initial steps feature the priming of an unusual benzoic acid starter unit onto the highly reducing polyketide synthase clz14, followed by oxaloacetate extension and product release to generate a tricarboxylic acid containing product (PubMed:28605916). The phenylalanine ammonia lyase (PAL) clz10 and the acyl-CoA ligase clz12 are involved in transforming phenylalanine into benzoyl-CoA (PubMed:28605916). The citrate synthase-like protein clz17 is involved in connecting the C-alpha-carbons of the hexaketide chain and oxaloacetate to afford the tricarboxylic acid unit (PubMed:28605916). The potential hydrolytic enzymes, clz11 and clz13, are in close proximity to pks2 and may participate in product release (PubMed:28605916). On the other side, the tetraketide arm is synthesized by a the squalestatin tetraketide synthase clz2 and enzymatically esterified to the core in the last biosynthetic step, by the acetyltransferase clz6 (By similarity). The biosynthesis of the tetraketide must involve 3 rounds of chain extension (By similarity). After the first and second rounds methyl-transfer occurs, and in all rounds of extension the ketoreductase and dehydratase are active (By similarity). The enoyl reductase and C-MeT of clz2 are not active in the final round of extension (By similarity). The acetyltransferase clz6 appears to have a broad substrate selectivity for its acyl CoA substrate, allowing the in vitro synthesis of novel squalestatins (By similarity). The biosynthesis of SQS1 requires several oxidative steps likely performed by oxidoreductases clz3, clz15 and clz16 (Probable). Finally, in support of the identification of the cluster as being responsible for SQS1 production, the cluster contains a gene encoding a putative squalene synthase (SS) clz20, suggesting a likely mechanism for self-resistance (Probable).</text>
</comment>
<comment type="pathway">
    <text evidence="7">Secondary metabolite biosynthesis.</text>
</comment>
<comment type="domain">
    <text evidence="9">Multidomain protein; including a ketosynthase (KS) that catalyzes repeated decarboxylative condensation to elongate the polyketide backbone; a malonyl-CoA:ACP transacylase (MAT) that selects and transfers the extender unit malonyl-CoA; a dehydratase (DH) domain that reduces hydroxyl groups to enoyl groups; a methyltransferase (CMeT) domain responsible for the incorporation of methyl groups; an enoylreductase (ER) domain that reduces enoyl groups to alkyl group; a ketoreductase (KR) domain that catalyzes beta-ketoreduction steps; and an acyl-carrier protein (ACP) that serves as the tether of the growing and completed polyketide via its phosphopantetheinyl arm.</text>
</comment>
<sequence length="2555" mass="279382">MDVSKEAGHHANGFANGNTNGTTNGHTNGHTNAHTNVHTNVHTNGHANGHTKVHTNGNTNGTANETANEATNRTPNATSTTTTTFEGQLPQVPVAICGIGVRLPGGVRSDSDLYQMLVEKRDARAIVPADRYNIKSYYDPRGRPGSILTEYGYYIDEDLAQMDASMFSMSNVELSMMDPAQRLLLEVTREAFEGAGEGDFRGKNIGTFVGDFTTDWQELQYADLIHTAPYQVIGGSDFVLSNRLAYEYNLTGPSASIKTACSATAEALHEALLAIRAGSCPSAIVAGANLILTPRGGIGMTAMGVLSPDGSCKTFDSSANGFARGDSVCAIYIKRLDLALRDGNPIRAVIRACDSNADGGGTGRTFGTPNPITHEALIRKTYADAGLELHNTSVIECHGTGTPIGDPLEAEAVANCFADGKRPVYIGSVKPNLGHGEGGSAMASIIKAVVALENRTIIPNVKFKNPNPKIAWDKNLKVPTEPLPWPQDCQERMSINSFGLGGSNTHIIIDSAASFGIPSPHSSLHETADLSNEAQTSILLMSANSLSSITAMSQRYSEYVQAHPDRVEDMAYTLATRRERLKQASYCIFNDGVLSTPPPPVVSSGIVQTAFIFTGQGAQWLGMGKELMQQQRAFAHSIREMDAVIKSLEYAPDWSLEDSDADKSALAQTDRAQPISTALQVALVDLLATWNVHPAAVVGHSSGEVAAAYAARILTRREAIITAFYRGHACARCEIPGGMAAVGLGRTKVEPLLKSGVVIACENSNASVTISGDRDALEEAMAGLREKYPTTLVRKLQVPMGYHSHHMATVADLYHRLVSPHLDPKSPQVPYFSTVYGRQVQEAKAFGPSYWQLNMESPVLFRTAVSEMLREMGSNTAHLEVGPHSALAGPLRQIYEETGLSAPYASTMVRGQNSCTAFLEGIGKLFCFGLSPQIPSSKTRTVLPDIPTYPWDYKDKFWSETRVMSNWRFKKHRTHELLGERSLESSDIEPCWRNLLRTGTVPWLADHCVGSDIIFPAAGFIAMAGAAASQLAGSDGHYTVREVHIFSALVLHETTATELITTLRKQPLTSSLQSKWFEFSISSESNGVWTKYCSGLVTASVVTSAGLPEMPDTTAFSRKVDTSRWYTSMSRIGLNYGRRFVGLEDISCSPVHQVASVQINDVQDDYEPYPLHPSTIDKFLQSWTLAFTKGEYRLLTQLYLPTFIEELSVAPAPGKKISGRTLASGIPGTTVGSSLGVVDDELVLSLRGFKCKKTDDAFIQNVSKPRSMTLEWHLDTNFTDLHQLIKPTRDTAPENEILERLYVLYALENWDQLKNSTSSHPHLNIYLSWLEEEVKGFTEPGHPLISDSKELVSMDVPHRRREIAFLRQRSKHYPMAAAVEVYARTCARMVEIMEGKDNLLNVLLEGDLLAKFYNYYNDASDLSSFFQAAGLNKPHMRVLEIGAGTGGWTAHALRGLTSELGDRLYEEYTITDVSHGFLNQCKERFAAHSNIKYALLDISSDPLEQGFEEGYYDIVIASNLVETLCRCRKVLNPAGCLLIQEACAPGSRHGYIMGLFEGWWAGREDGRVRSPLIPVEEWDARLKLAGFEGAGTVVLDGQVPYYNYANIIARPAPTTIAQPESRLTLMTSSPELEDFSAILKTMLEEAGYLLDVCPWGADLPSDQDVVFLVDTEASVPVLADENPDNLATFLRYMKDISTSTVLWVTKPAQTICPDPRHGLITGMARTLRAELDMYIATLEIHKLDKPAASAVVQVLRKLQDAARLEESQGDEKSSDIKVDFEYAFSNGELLIPRFHPFVVDQVLLKDVPCADSRHLEIAQRGMLNTLHWVGDTLPELGPSEVELNMTAVGMNFLDLAVAMNIVDMAQSLGKGYNALGSEGSGIVTRVGSSVTNLKVGDRVATMGVDTSVFASKLQRPAESCVRLPPGLSDEDAAGILVPYATVLWSFIEKARLKKGQTVLIHSAAGGVGIAAIHVARWIGAEIYTTVGAQAKVDFLVNELDVPRDRIFHSRDDSFVKDVLSATNGKGIDVVLNSLSGELLHATWQCVAPGGCMLEIGKRDFLGRAQLAMHLFEENRAYFGIDLSRLALSEPEALQELLQKTMVLLEKQQLQPLWPTNTFDAVAVEDAFRYMQRGVHMGRIVVRMPEDDSVLPIAPVLPEPQFKADSTYLLTGGMGGLGRSIIRWMVSYGAKDITVMSRSAGNRDVDRALIAEIGELGCTLQCFAADIADMHSLQNVLSSLSKPVAGVLHMAMVLRDVGTLNMDFDSWTAALRPKVQGTWNLHDKLSENLDFFVLFSSISGTLGSYGQANYAAGNTFLDSFVRFRHGLGRPASVIDIAAIGDVGYVAETKDVAERIGRAFGSLGTEQEFLDTLQLAIARSTGPPEQQELSSKKTTKYAQPSQIVMHNRMIPPLSDPRNTTPWKNDARMAIYRNTEEAPQSTSSQSKERLGLFLVSLTTDPDQLDEPETPIIFAQEIAKRVAAFLMKGDKEDNALDTSLTLSQMGADSLVAIEIRNWWKQTFGMEISTLELNSPGQTFDSLGRLATKRLKEAYILKSS</sequence>
<accession>A0A345BJN0</accession>
<evidence type="ECO:0000250" key="1">
    <source>
        <dbReference type="UniProtKB" id="A0A3G1DJF3"/>
    </source>
</evidence>
<evidence type="ECO:0000255" key="2"/>
<evidence type="ECO:0000255" key="3">
    <source>
        <dbReference type="PROSITE-ProRule" id="PRU00258"/>
    </source>
</evidence>
<evidence type="ECO:0000255" key="4">
    <source>
        <dbReference type="PROSITE-ProRule" id="PRU01348"/>
    </source>
</evidence>
<evidence type="ECO:0000255" key="5">
    <source>
        <dbReference type="PROSITE-ProRule" id="PRU01363"/>
    </source>
</evidence>
<evidence type="ECO:0000256" key="6">
    <source>
        <dbReference type="SAM" id="MobiDB-lite"/>
    </source>
</evidence>
<evidence type="ECO:0000269" key="7">
    <source>
    </source>
</evidence>
<evidence type="ECO:0000303" key="8">
    <source>
    </source>
</evidence>
<evidence type="ECO:0000305" key="9">
    <source>
    </source>
</evidence>
<gene>
    <name evidence="8" type="primary">clz14</name>
</gene>
<proteinExistence type="evidence at protein level"/>
<organism>
    <name type="scientific">Cochliobolus lunatus</name>
    <name type="common">Filamentous fungus</name>
    <name type="synonym">Curvularia lunata</name>
    <dbReference type="NCBI Taxonomy" id="5503"/>
    <lineage>
        <taxon>Eukaryota</taxon>
        <taxon>Fungi</taxon>
        <taxon>Dikarya</taxon>
        <taxon>Ascomycota</taxon>
        <taxon>Pezizomycotina</taxon>
        <taxon>Dothideomycetes</taxon>
        <taxon>Pleosporomycetidae</taxon>
        <taxon>Pleosporales</taxon>
        <taxon>Pleosporineae</taxon>
        <taxon>Pleosporaceae</taxon>
        <taxon>Curvularia</taxon>
    </lineage>
</organism>
<protein>
    <recommendedName>
        <fullName evidence="8">Squalestatin hexaketide synthase clz14</fullName>
        <shortName evidence="8">SQHKS clz14</shortName>
        <ecNumber evidence="7">2.3.1.-</ecNumber>
    </recommendedName>
    <alternativeName>
        <fullName evidence="8">Highly reducing polyketide synthase clz14</fullName>
        <shortName evidence="8">HR-PKS clz14</shortName>
    </alternativeName>
    <alternativeName>
        <fullName evidence="8">Squalestatin S1 biosynthesis cluster protein clz14</fullName>
    </alternativeName>
    <alternativeName>
        <fullName evidence="8">Zaragozic acid A biosynthesis cluster protein 14</fullName>
    </alternativeName>
    <alternativeName>
        <fullName evidence="8">Zaragozic acid A hexaketide synthase clz14</fullName>
    </alternativeName>
</protein>